<organism>
    <name type="scientific">Cricetulus griseus</name>
    <name type="common">Chinese hamster</name>
    <name type="synonym">Cricetulus barabensis griseus</name>
    <dbReference type="NCBI Taxonomy" id="10029"/>
    <lineage>
        <taxon>Eukaryota</taxon>
        <taxon>Metazoa</taxon>
        <taxon>Chordata</taxon>
        <taxon>Craniata</taxon>
        <taxon>Vertebrata</taxon>
        <taxon>Euteleostomi</taxon>
        <taxon>Mammalia</taxon>
        <taxon>Eutheria</taxon>
        <taxon>Euarchontoglires</taxon>
        <taxon>Glires</taxon>
        <taxon>Rodentia</taxon>
        <taxon>Myomorpha</taxon>
        <taxon>Muroidea</taxon>
        <taxon>Cricetidae</taxon>
        <taxon>Cricetinae</taxon>
        <taxon>Cricetulus</taxon>
    </lineage>
</organism>
<gene>
    <name type="primary">XRCC1</name>
</gene>
<accession>O54935</accession>
<name>XRCC1_CRIGR</name>
<comment type="function">
    <text evidence="1">Scaffold protein involved in DNA single-strand break repair by mediating the assembly of DNA break repair protein complexes. Negatively regulates ADP-ribosyltransferase activity of PARP1 during base-excision repair in order to prevent excessive PARP1 activity. Recognizes and binds poly-ADP-ribose chains: specifically binds auto-poly-ADP-ribosylated PARP1, limiting its activity.</text>
</comment>
<comment type="subunit">
    <text evidence="1">Homodimer. Interacts with polynucleotide kinase (PNK), DNA polymerase-beta (POLB) and DNA ligase III (LIG3). Interacts with APTX and APLF. Interacts with APEX1; the interaction is induced by SIRT1 and increases with the acetylated form of APEX1. Interacts with (poly-ADP-ribosylated) PARP1.</text>
</comment>
<comment type="subcellular location">
    <subcellularLocation>
        <location evidence="1">Nucleus</location>
    </subcellularLocation>
    <subcellularLocation>
        <location evidence="1">Chromosome</location>
    </subcellularLocation>
    <text evidence="1">Moves from the nucleoli to the global nuclear chromatin upon DNA damage. Recruited to DNA damage sites fowwing interaction with poly-ADP-ribose chains.</text>
</comment>
<comment type="PTM">
    <text evidence="1">Phosphorylation of Ser-372 causes dimer dissociation. Phosphorylation by CK2 promotes interaction with APTX and APLF (By similarity).</text>
</comment>
<comment type="PTM">
    <text evidence="1">Sumoylated.</text>
</comment>
<evidence type="ECO:0000250" key="1">
    <source>
        <dbReference type="UniProtKB" id="P18887"/>
    </source>
</evidence>
<evidence type="ECO:0000255" key="2">
    <source>
        <dbReference type="PROSITE-ProRule" id="PRU00033"/>
    </source>
</evidence>
<evidence type="ECO:0000256" key="3">
    <source>
        <dbReference type="SAM" id="MobiDB-lite"/>
    </source>
</evidence>
<evidence type="ECO:0000269" key="4">
    <source>
    </source>
</evidence>
<dbReference type="EMBL" id="AF034203">
    <property type="protein sequence ID" value="AAC40038.1"/>
    <property type="molecule type" value="mRNA"/>
</dbReference>
<dbReference type="RefSeq" id="NP_001233608.1">
    <property type="nucleotide sequence ID" value="NM_001246679.1"/>
</dbReference>
<dbReference type="SMR" id="O54935"/>
<dbReference type="PaxDb" id="10029-NP_001233608.1"/>
<dbReference type="GeneID" id="100689414"/>
<dbReference type="KEGG" id="cge:100689414"/>
<dbReference type="CTD" id="7515"/>
<dbReference type="eggNOG" id="KOG3226">
    <property type="taxonomic scope" value="Eukaryota"/>
</dbReference>
<dbReference type="OrthoDB" id="25840at2759"/>
<dbReference type="Proteomes" id="UP000694386">
    <property type="component" value="Unplaced"/>
</dbReference>
<dbReference type="Proteomes" id="UP001108280">
    <property type="component" value="Chromosome 9"/>
</dbReference>
<dbReference type="GO" id="GO:0005694">
    <property type="term" value="C:chromosome"/>
    <property type="evidence" value="ECO:0007669"/>
    <property type="project" value="UniProtKB-SubCell"/>
</dbReference>
<dbReference type="GO" id="GO:0005634">
    <property type="term" value="C:nucleus"/>
    <property type="evidence" value="ECO:0000314"/>
    <property type="project" value="BHF-UCL"/>
</dbReference>
<dbReference type="GO" id="GO:0003684">
    <property type="term" value="F:damaged DNA binding"/>
    <property type="evidence" value="ECO:0007669"/>
    <property type="project" value="InterPro"/>
</dbReference>
<dbReference type="GO" id="GO:0006284">
    <property type="term" value="P:base-excision repair"/>
    <property type="evidence" value="ECO:0007669"/>
    <property type="project" value="InterPro"/>
</dbReference>
<dbReference type="GO" id="GO:0006303">
    <property type="term" value="P:double-strand break repair via nonhomologous end joining"/>
    <property type="evidence" value="ECO:0007669"/>
    <property type="project" value="InterPro"/>
</dbReference>
<dbReference type="GO" id="GO:0000012">
    <property type="term" value="P:single strand break repair"/>
    <property type="evidence" value="ECO:0007669"/>
    <property type="project" value="InterPro"/>
</dbReference>
<dbReference type="CDD" id="cd17725">
    <property type="entry name" value="BRCT_XRCC1_rpt1"/>
    <property type="match status" value="1"/>
</dbReference>
<dbReference type="CDD" id="cd17707">
    <property type="entry name" value="BRCT_XRCC1_rpt2"/>
    <property type="match status" value="1"/>
</dbReference>
<dbReference type="FunFam" id="2.60.120.260:FF:000025">
    <property type="entry name" value="DNA repair protein XRCC1 isoform X1"/>
    <property type="match status" value="1"/>
</dbReference>
<dbReference type="FunFam" id="3.40.50.10190:FF:000008">
    <property type="entry name" value="X-ray repair cross complementing 1"/>
    <property type="match status" value="1"/>
</dbReference>
<dbReference type="FunFam" id="3.40.50.10190:FF:000012">
    <property type="entry name" value="X-ray repair cross complementing 1"/>
    <property type="match status" value="1"/>
</dbReference>
<dbReference type="Gene3D" id="3.40.50.10190">
    <property type="entry name" value="BRCT domain"/>
    <property type="match status" value="2"/>
</dbReference>
<dbReference type="Gene3D" id="2.60.120.260">
    <property type="entry name" value="Galactose-binding domain-like"/>
    <property type="match status" value="1"/>
</dbReference>
<dbReference type="InterPro" id="IPR001357">
    <property type="entry name" value="BRCT_dom"/>
</dbReference>
<dbReference type="InterPro" id="IPR036420">
    <property type="entry name" value="BRCT_dom_sf"/>
</dbReference>
<dbReference type="InterPro" id="IPR045080">
    <property type="entry name" value="BRCT_XRCC1_rpt1"/>
</dbReference>
<dbReference type="InterPro" id="IPR008979">
    <property type="entry name" value="Galactose-bd-like_sf"/>
</dbReference>
<dbReference type="InterPro" id="IPR002706">
    <property type="entry name" value="Xrcc1_N"/>
</dbReference>
<dbReference type="PANTHER" id="PTHR11370:SF5">
    <property type="entry name" value="DNA REPAIR PROTEIN XRCC1"/>
    <property type="match status" value="1"/>
</dbReference>
<dbReference type="PANTHER" id="PTHR11370">
    <property type="entry name" value="DNA-REPAIR PROTEIN XRCC1"/>
    <property type="match status" value="1"/>
</dbReference>
<dbReference type="Pfam" id="PF00533">
    <property type="entry name" value="BRCT"/>
    <property type="match status" value="1"/>
</dbReference>
<dbReference type="Pfam" id="PF16589">
    <property type="entry name" value="BRCT_2"/>
    <property type="match status" value="1"/>
</dbReference>
<dbReference type="Pfam" id="PF01834">
    <property type="entry name" value="XRCC1_N"/>
    <property type="match status" value="1"/>
</dbReference>
<dbReference type="SMART" id="SM00292">
    <property type="entry name" value="BRCT"/>
    <property type="match status" value="2"/>
</dbReference>
<dbReference type="SUPFAM" id="SSF52113">
    <property type="entry name" value="BRCT domain"/>
    <property type="match status" value="2"/>
</dbReference>
<dbReference type="SUPFAM" id="SSF49785">
    <property type="entry name" value="Galactose-binding domain-like"/>
    <property type="match status" value="1"/>
</dbReference>
<dbReference type="PROSITE" id="PS50172">
    <property type="entry name" value="BRCT"/>
    <property type="match status" value="2"/>
</dbReference>
<reference key="1">
    <citation type="journal article" date="1998" name="Nucleic Acids Res.">
        <title>Mutations in hamster single-strand break repair gene XRCC1 causing defective DNA repair.</title>
        <authorList>
            <person name="Shen M.R."/>
            <person name="Zdzienicka M.Z."/>
            <person name="Mohrenweiser H."/>
            <person name="Thompson L.H."/>
            <person name="Thelen M.P."/>
        </authorList>
    </citation>
    <scope>NUCLEOTIDE SEQUENCE [MRNA]</scope>
    <scope>VARIANTS LYS-102 AND TYR-390</scope>
    <source>
        <tissue>Ovary</tissue>
    </source>
</reference>
<proteinExistence type="evidence at transcript level"/>
<protein>
    <recommendedName>
        <fullName>DNA repair protein XRCC1</fullName>
    </recommendedName>
    <alternativeName>
        <fullName>X-ray repair cross-complementing protein 1</fullName>
    </alternativeName>
</protein>
<sequence>MPEISLRHVVSGSSQDSTHCAENLLKADTYRKWRAATAGEKTISVVLQLEKEEQIHSIDIGNDGSAFVEVLVTRSAGGGGATAIEQDYEVLLVTSSFMSPSESRSGSNPNRVRMFGPDKLVRAAAEKRWDRVKIVCSQPYSKDSPYGLSFVRFHSPPDKDEAETPSQKGTVTKLGQFRVKEEDDGASSLKPGALFFSRINKTSSASARGPAGPSYAAATLQASNATSSASSVSKALGSSCKPQESPKGKRKLDLNLEDRRPASKPSAGPPTLKRPKLTVPSRSPAAAAASTPAQKAAPGKPREGTEPRGARAGPQELGKILQGVVVVLSGFQNPFRSELRDKALELGAKYRPDWTPDSTHLICAFANTPKYSQVLGLGGRIVRKEWVLDCYRLRRRLPSRRYLMAGLGSSSEDEEDDSPGESGEDEAPKLSRKRPQAKAKTQAAGPSSPQRPPTPKETKSPSPEPQDNSDTEGEQSEGQDNGAEDSGDTEDELRRVAEQREQRQPPAPGENGEDPYAGSTDENTDNEASTEADLPIPELPDFFQGKHFFLYGEFPGDERRKLIRYVTAFNGELEDYMSERVQFVITAQEWDPIFEEALMENPSLAFVRPRWIYSCNEKQKLLPHQLYGVVPQA</sequence>
<keyword id="KW-0158">Chromosome</keyword>
<keyword id="KW-0227">DNA damage</keyword>
<keyword id="KW-0234">DNA repair</keyword>
<keyword id="KW-1017">Isopeptide bond</keyword>
<keyword id="KW-0539">Nucleus</keyword>
<keyword id="KW-0597">Phosphoprotein</keyword>
<keyword id="KW-0677">Repeat</keyword>
<keyword id="KW-0832">Ubl conjugation</keyword>
<feature type="chain" id="PRO_0000066043" description="DNA repair protein XRCC1">
    <location>
        <begin position="1"/>
        <end position="633"/>
    </location>
</feature>
<feature type="domain" description="BRCT 1" evidence="2">
    <location>
        <begin position="316"/>
        <end position="404"/>
    </location>
</feature>
<feature type="domain" description="BRCT 2" evidence="2">
    <location>
        <begin position="538"/>
        <end position="629"/>
    </location>
</feature>
<feature type="region of interest" description="Disordered" evidence="3">
    <location>
        <begin position="151"/>
        <end position="172"/>
    </location>
</feature>
<feature type="region of interest" description="Disordered" evidence="3">
    <location>
        <begin position="234"/>
        <end position="316"/>
    </location>
</feature>
<feature type="region of interest" description="Disordered" evidence="3">
    <location>
        <begin position="407"/>
        <end position="538"/>
    </location>
</feature>
<feature type="compositionally biased region" description="Basic and acidic residues" evidence="3">
    <location>
        <begin position="244"/>
        <end position="261"/>
    </location>
</feature>
<feature type="compositionally biased region" description="Low complexity" evidence="3">
    <location>
        <begin position="280"/>
        <end position="298"/>
    </location>
</feature>
<feature type="compositionally biased region" description="Basic and acidic residues" evidence="3">
    <location>
        <begin position="300"/>
        <end position="309"/>
    </location>
</feature>
<feature type="compositionally biased region" description="Acidic residues" evidence="3">
    <location>
        <begin position="411"/>
        <end position="425"/>
    </location>
</feature>
<feature type="compositionally biased region" description="Acidic residues" evidence="3">
    <location>
        <begin position="467"/>
        <end position="491"/>
    </location>
</feature>
<feature type="compositionally biased region" description="Basic and acidic residues" evidence="3">
    <location>
        <begin position="492"/>
        <end position="503"/>
    </location>
</feature>
<feature type="modified residue" description="Phosphoserine" evidence="1">
    <location>
        <position position="144"/>
    </location>
</feature>
<feature type="modified residue" description="Phosphothreonine" evidence="1">
    <location>
        <position position="202"/>
    </location>
</feature>
<feature type="modified residue" description="Phosphoserine" evidence="1">
    <location>
        <position position="203"/>
    </location>
</feature>
<feature type="modified residue" description="Phosphoserine" evidence="1">
    <location>
        <position position="230"/>
    </location>
</feature>
<feature type="modified residue" description="Phosphoserine" evidence="1">
    <location>
        <position position="245"/>
    </location>
</feature>
<feature type="modified residue" description="Phosphoserine" evidence="1">
    <location>
        <position position="263"/>
    </location>
</feature>
<feature type="modified residue" description="Phosphoserine" evidence="1">
    <location>
        <position position="372"/>
    </location>
</feature>
<feature type="modified residue" description="Phosphoserine" evidence="1">
    <location>
        <position position="409"/>
    </location>
</feature>
<feature type="modified residue" description="Phosphoserine" evidence="1">
    <location>
        <position position="410"/>
    </location>
</feature>
<feature type="modified residue" description="Phosphoserine" evidence="1">
    <location>
        <position position="411"/>
    </location>
</feature>
<feature type="modified residue" description="Phosphoserine" evidence="1">
    <location>
        <position position="447"/>
    </location>
</feature>
<feature type="modified residue" description="Phosphoserine" evidence="1">
    <location>
        <position position="448"/>
    </location>
</feature>
<feature type="modified residue" description="Phosphothreonine" evidence="1">
    <location>
        <position position="454"/>
    </location>
</feature>
<feature type="modified residue" description="Phosphothreonine" evidence="1">
    <location>
        <position position="458"/>
    </location>
</feature>
<feature type="modified residue" description="Phosphoserine" evidence="1">
    <location>
        <position position="462"/>
    </location>
</feature>
<feature type="modified residue" description="Phosphoserine" evidence="1">
    <location>
        <position position="486"/>
    </location>
</feature>
<feature type="modified residue" description="Phosphothreonine" evidence="1">
    <location>
        <position position="489"/>
    </location>
</feature>
<feature type="modified residue" description="Phosphoserine" evidence="1">
    <location>
        <position position="519"/>
    </location>
</feature>
<feature type="modified residue" description="Phosphothreonine" evidence="1">
    <location>
        <position position="520"/>
    </location>
</feature>
<feature type="modified residue" description="Phosphothreonine" evidence="1">
    <location>
        <position position="524"/>
    </location>
</feature>
<feature type="cross-link" description="Glycyl lysine isopeptide (Lys-Gly) (interchain with G-Cter in SUMO1); alternate" evidence="1">
    <location>
        <position position="180"/>
    </location>
</feature>
<feature type="cross-link" description="Glycyl lysine isopeptide (Lys-Gly) (interchain with G-Cter in SUMO2); alternate" evidence="1">
    <location>
        <position position="180"/>
    </location>
</feature>
<feature type="sequence variant" description="In a mutant cell line defective in DNA repair." evidence="4">
    <original>E</original>
    <variation>K</variation>
    <location>
        <position position="102"/>
    </location>
</feature>
<feature type="sequence variant" description="In a mutant cell line defective in DNA repair." evidence="4">
    <original>C</original>
    <variation>Y</variation>
    <location>
        <position position="390"/>
    </location>
</feature>